<organism>
    <name type="scientific">Takifugu rubripes</name>
    <name type="common">Japanese pufferfish</name>
    <name type="synonym">Fugu rubripes</name>
    <dbReference type="NCBI Taxonomy" id="31033"/>
    <lineage>
        <taxon>Eukaryota</taxon>
        <taxon>Metazoa</taxon>
        <taxon>Chordata</taxon>
        <taxon>Craniata</taxon>
        <taxon>Vertebrata</taxon>
        <taxon>Euteleostomi</taxon>
        <taxon>Actinopterygii</taxon>
        <taxon>Neopterygii</taxon>
        <taxon>Teleostei</taxon>
        <taxon>Neoteleostei</taxon>
        <taxon>Acanthomorphata</taxon>
        <taxon>Eupercaria</taxon>
        <taxon>Tetraodontiformes</taxon>
        <taxon>Tetradontoidea</taxon>
        <taxon>Tetraodontidae</taxon>
        <taxon>Takifugu</taxon>
    </lineage>
</organism>
<reference key="1">
    <citation type="journal article" date="1996" name="Nucleic Acids Res.">
        <title>A functional role for some Fugu introns larger than the typical short ones: the example of the gene coding for ribosomal protein S7 and snoRNA U17.</title>
        <authorList>
            <person name="Cecconi F."/>
            <person name="Crosio C."/>
            <person name="Mariottini P."/>
            <person name="Cesareni G."/>
            <person name="Giorgi M."/>
            <person name="Brenner S."/>
            <person name="Amaldi F."/>
        </authorList>
    </citation>
    <scope>NUCLEOTIDE SEQUENCE [GENOMIC DNA]</scope>
</reference>
<dbReference type="EMBL" id="X94942">
    <property type="protein sequence ID" value="CAA64412.1"/>
    <property type="molecule type" value="Genomic_DNA"/>
</dbReference>
<dbReference type="RefSeq" id="NP_001272880.1">
    <property type="nucleotide sequence ID" value="NM_001285951.1"/>
</dbReference>
<dbReference type="RefSeq" id="XP_011610062.1">
    <property type="nucleotide sequence ID" value="XM_011611760.1"/>
</dbReference>
<dbReference type="SMR" id="P50894"/>
<dbReference type="FunCoup" id="P50894">
    <property type="interactions" value="1688"/>
</dbReference>
<dbReference type="STRING" id="31033.ENSTRUP00000057373"/>
<dbReference type="GeneID" id="101073757"/>
<dbReference type="KEGG" id="tru:101073757"/>
<dbReference type="CTD" id="6201"/>
<dbReference type="eggNOG" id="KOG3320">
    <property type="taxonomic scope" value="Eukaryota"/>
</dbReference>
<dbReference type="HOGENOM" id="CLU_088621_1_2_1"/>
<dbReference type="InParanoid" id="P50894"/>
<dbReference type="OrthoDB" id="1724687at2759"/>
<dbReference type="TreeFam" id="TF343364"/>
<dbReference type="Proteomes" id="UP000005226">
    <property type="component" value="Unplaced"/>
</dbReference>
<dbReference type="GO" id="GO:0030686">
    <property type="term" value="C:90S preribosome"/>
    <property type="evidence" value="ECO:0007669"/>
    <property type="project" value="TreeGrafter"/>
</dbReference>
<dbReference type="GO" id="GO:0005813">
    <property type="term" value="C:centrosome"/>
    <property type="evidence" value="ECO:0007669"/>
    <property type="project" value="UniProtKB-SubCell"/>
</dbReference>
<dbReference type="GO" id="GO:0022627">
    <property type="term" value="C:cytosolic small ribosomal subunit"/>
    <property type="evidence" value="ECO:0007669"/>
    <property type="project" value="TreeGrafter"/>
</dbReference>
<dbReference type="GO" id="GO:0005634">
    <property type="term" value="C:nucleus"/>
    <property type="evidence" value="ECO:0007669"/>
    <property type="project" value="UniProtKB-SubCell"/>
</dbReference>
<dbReference type="GO" id="GO:0032040">
    <property type="term" value="C:small-subunit processome"/>
    <property type="evidence" value="ECO:0007669"/>
    <property type="project" value="TreeGrafter"/>
</dbReference>
<dbReference type="GO" id="GO:0003735">
    <property type="term" value="F:structural constituent of ribosome"/>
    <property type="evidence" value="ECO:0007669"/>
    <property type="project" value="InterPro"/>
</dbReference>
<dbReference type="GO" id="GO:0042274">
    <property type="term" value="P:ribosomal small subunit biogenesis"/>
    <property type="evidence" value="ECO:0007669"/>
    <property type="project" value="TreeGrafter"/>
</dbReference>
<dbReference type="GO" id="GO:0006364">
    <property type="term" value="P:rRNA processing"/>
    <property type="evidence" value="ECO:0007669"/>
    <property type="project" value="TreeGrafter"/>
</dbReference>
<dbReference type="GO" id="GO:0006412">
    <property type="term" value="P:translation"/>
    <property type="evidence" value="ECO:0007669"/>
    <property type="project" value="InterPro"/>
</dbReference>
<dbReference type="InterPro" id="IPR000554">
    <property type="entry name" value="Ribosomal_eS7"/>
</dbReference>
<dbReference type="InterPro" id="IPR047861">
    <property type="entry name" value="Ribosomal_eS7_CS"/>
</dbReference>
<dbReference type="PANTHER" id="PTHR11278">
    <property type="entry name" value="40S RIBOSOMAL PROTEIN S7"/>
    <property type="match status" value="1"/>
</dbReference>
<dbReference type="PANTHER" id="PTHR11278:SF0">
    <property type="entry name" value="SMALL RIBOSOMAL SUBUNIT PROTEIN ES7"/>
    <property type="match status" value="1"/>
</dbReference>
<dbReference type="Pfam" id="PF01251">
    <property type="entry name" value="Ribosomal_S7e"/>
    <property type="match status" value="1"/>
</dbReference>
<dbReference type="PROSITE" id="PS00948">
    <property type="entry name" value="RIBOSOMAL_S7E"/>
    <property type="match status" value="1"/>
</dbReference>
<evidence type="ECO:0000250" key="1">
    <source>
        <dbReference type="UniProtKB" id="P62081"/>
    </source>
</evidence>
<evidence type="ECO:0000305" key="2"/>
<comment type="function">
    <text evidence="1">Component of the small ribosomal subunit. The ribosome is a large ribonucleoprotein complex responsible for the synthesis of proteins in the cell. Required for rRNA maturation.</text>
</comment>
<comment type="subunit">
    <text evidence="1">Component of the small ribosomal subunit.</text>
</comment>
<comment type="subcellular location">
    <subcellularLocation>
        <location evidence="1">Cytoplasm</location>
        <location evidence="1">Cytoskeleton</location>
        <location evidence="1">Microtubule organizing center</location>
        <location evidence="1">Centrosome</location>
    </subcellularLocation>
    <subcellularLocation>
        <location evidence="1">Cytoplasm</location>
    </subcellularLocation>
    <subcellularLocation>
        <location evidence="1">Nucleus</location>
    </subcellularLocation>
</comment>
<comment type="similarity">
    <text evidence="2">Belongs to the eukaryotic ribosomal protein eS7 family.</text>
</comment>
<name>RS7_TAKRU</name>
<feature type="chain" id="PRO_0000174194" description="Small ribosomal subunit protein eS7">
    <location>
        <begin position="1"/>
        <end position="194"/>
    </location>
</feature>
<accession>P50894</accession>
<accession>P53548</accession>
<keyword id="KW-0963">Cytoplasm</keyword>
<keyword id="KW-0206">Cytoskeleton</keyword>
<keyword id="KW-0539">Nucleus</keyword>
<keyword id="KW-1185">Reference proteome</keyword>
<keyword id="KW-0687">Ribonucleoprotein</keyword>
<keyword id="KW-0689">Ribosomal protein</keyword>
<protein>
    <recommendedName>
        <fullName evidence="2">Small ribosomal subunit protein eS7</fullName>
    </recommendedName>
    <alternativeName>
        <fullName>40S ribosomal protein S7</fullName>
    </alternativeName>
</protein>
<gene>
    <name type="primary">rps7</name>
</gene>
<sequence length="194" mass="22206">MFSTSAKIVKPNGEKPDEFESGISQALLELEMNSDLKAQLRELNITAAKEIEVGGSRKAIIIFVPVPQLKSFQKIQVRLVRELEKKFSGKHVVFIAQRRILPKPTRKSRSKNKQKRPRSRTLTSVHDAILEDLVFPSEIVGKRIRVKMDSSRLIKVHLDKAQQNNVEHKVETFSGVYKKLTGKDVVFEFPEFQL</sequence>
<proteinExistence type="inferred from homology"/>